<protein>
    <recommendedName>
        <fullName evidence="1">1-(5-phosphoribosyl)-5-[(5-phosphoribosylamino)methylideneamino] imidazole-4-carboxamide isomerase</fullName>
        <ecNumber evidence="1">5.3.1.16</ecNumber>
    </recommendedName>
    <alternativeName>
        <fullName evidence="1">Phosphoribosylformimino-5-aminoimidazole carboxamide ribotide isomerase</fullName>
    </alternativeName>
</protein>
<reference key="1">
    <citation type="journal article" date="2008" name="Chem. Biol. Interact.">
        <title>Extending the Bacillus cereus group genomics to putative food-borne pathogens of different toxicity.</title>
        <authorList>
            <person name="Lapidus A."/>
            <person name="Goltsman E."/>
            <person name="Auger S."/>
            <person name="Galleron N."/>
            <person name="Segurens B."/>
            <person name="Dossat C."/>
            <person name="Land M.L."/>
            <person name="Broussolle V."/>
            <person name="Brillard J."/>
            <person name="Guinebretiere M.-H."/>
            <person name="Sanchis V."/>
            <person name="Nguen-the C."/>
            <person name="Lereclus D."/>
            <person name="Richardson P."/>
            <person name="Wincker P."/>
            <person name="Weissenbach J."/>
            <person name="Ehrlich S.D."/>
            <person name="Sorokin A."/>
        </authorList>
    </citation>
    <scope>NUCLEOTIDE SEQUENCE [LARGE SCALE GENOMIC DNA]</scope>
    <source>
        <strain>DSM 22905 / CIP 110041 / 391-98 / NVH 391-98</strain>
    </source>
</reference>
<evidence type="ECO:0000255" key="1">
    <source>
        <dbReference type="HAMAP-Rule" id="MF_01014"/>
    </source>
</evidence>
<comment type="catalytic activity">
    <reaction evidence="1">
        <text>1-(5-phospho-beta-D-ribosyl)-5-[(5-phospho-beta-D-ribosylamino)methylideneamino]imidazole-4-carboxamide = 5-[(5-phospho-1-deoxy-D-ribulos-1-ylimino)methylamino]-1-(5-phospho-beta-D-ribosyl)imidazole-4-carboxamide</text>
        <dbReference type="Rhea" id="RHEA:15469"/>
        <dbReference type="ChEBI" id="CHEBI:58435"/>
        <dbReference type="ChEBI" id="CHEBI:58525"/>
        <dbReference type="EC" id="5.3.1.16"/>
    </reaction>
</comment>
<comment type="pathway">
    <text evidence="1">Amino-acid biosynthesis; L-histidine biosynthesis; L-histidine from 5-phospho-alpha-D-ribose 1-diphosphate: step 4/9.</text>
</comment>
<comment type="subcellular location">
    <subcellularLocation>
        <location evidence="1">Cytoplasm</location>
    </subcellularLocation>
</comment>
<comment type="similarity">
    <text evidence="1">Belongs to the HisA/HisF family.</text>
</comment>
<dbReference type="EC" id="5.3.1.16" evidence="1"/>
<dbReference type="EMBL" id="CP000764">
    <property type="protein sequence ID" value="ABS21457.1"/>
    <property type="molecule type" value="Genomic_DNA"/>
</dbReference>
<dbReference type="RefSeq" id="WP_011984210.1">
    <property type="nucleotide sequence ID" value="NC_009674.1"/>
</dbReference>
<dbReference type="SMR" id="A7GMU9"/>
<dbReference type="STRING" id="315749.Bcer98_1132"/>
<dbReference type="GeneID" id="33896488"/>
<dbReference type="KEGG" id="bcy:Bcer98_1132"/>
<dbReference type="eggNOG" id="COG0106">
    <property type="taxonomic scope" value="Bacteria"/>
</dbReference>
<dbReference type="HOGENOM" id="CLU_048577_1_1_9"/>
<dbReference type="OrthoDB" id="9807749at2"/>
<dbReference type="UniPathway" id="UPA00031">
    <property type="reaction ID" value="UER00009"/>
</dbReference>
<dbReference type="Proteomes" id="UP000002300">
    <property type="component" value="Chromosome"/>
</dbReference>
<dbReference type="GO" id="GO:0005737">
    <property type="term" value="C:cytoplasm"/>
    <property type="evidence" value="ECO:0007669"/>
    <property type="project" value="UniProtKB-SubCell"/>
</dbReference>
<dbReference type="GO" id="GO:0003949">
    <property type="term" value="F:1-(5-phosphoribosyl)-5-[(5-phosphoribosylamino)methylideneamino]imidazole-4-carboxamide isomerase activity"/>
    <property type="evidence" value="ECO:0007669"/>
    <property type="project" value="UniProtKB-UniRule"/>
</dbReference>
<dbReference type="GO" id="GO:0000105">
    <property type="term" value="P:L-histidine biosynthetic process"/>
    <property type="evidence" value="ECO:0007669"/>
    <property type="project" value="UniProtKB-UniRule"/>
</dbReference>
<dbReference type="GO" id="GO:0000162">
    <property type="term" value="P:L-tryptophan biosynthetic process"/>
    <property type="evidence" value="ECO:0007669"/>
    <property type="project" value="TreeGrafter"/>
</dbReference>
<dbReference type="CDD" id="cd04732">
    <property type="entry name" value="HisA"/>
    <property type="match status" value="1"/>
</dbReference>
<dbReference type="FunFam" id="3.20.20.70:FF:000009">
    <property type="entry name" value="1-(5-phosphoribosyl)-5-[(5-phosphoribosylamino)methylideneamino] imidazole-4-carboxamide isomerase"/>
    <property type="match status" value="1"/>
</dbReference>
<dbReference type="Gene3D" id="3.20.20.70">
    <property type="entry name" value="Aldolase class I"/>
    <property type="match status" value="1"/>
</dbReference>
<dbReference type="HAMAP" id="MF_01014">
    <property type="entry name" value="HisA"/>
    <property type="match status" value="1"/>
</dbReference>
<dbReference type="InterPro" id="IPR013785">
    <property type="entry name" value="Aldolase_TIM"/>
</dbReference>
<dbReference type="InterPro" id="IPR006062">
    <property type="entry name" value="His_biosynth"/>
</dbReference>
<dbReference type="InterPro" id="IPR006063">
    <property type="entry name" value="HisA_bact_arch"/>
</dbReference>
<dbReference type="InterPro" id="IPR044524">
    <property type="entry name" value="Isoase_HisA-like"/>
</dbReference>
<dbReference type="InterPro" id="IPR023016">
    <property type="entry name" value="Isoase_HisA-like_bact"/>
</dbReference>
<dbReference type="InterPro" id="IPR011060">
    <property type="entry name" value="RibuloseP-bd_barrel"/>
</dbReference>
<dbReference type="NCBIfam" id="TIGR00007">
    <property type="entry name" value="1-(5-phosphoribosyl)-5-[(5-phosphoribosylamino)methylideneamino]imidazole-4-carboxamide isomerase"/>
    <property type="match status" value="1"/>
</dbReference>
<dbReference type="PANTHER" id="PTHR43090">
    <property type="entry name" value="1-(5-PHOSPHORIBOSYL)-5-[(5-PHOSPHORIBOSYLAMINO)METHYLIDENEAMINO] IMIDAZOLE-4-CARBOXAMIDE ISOMERASE"/>
    <property type="match status" value="1"/>
</dbReference>
<dbReference type="PANTHER" id="PTHR43090:SF2">
    <property type="entry name" value="1-(5-PHOSPHORIBOSYL)-5-[(5-PHOSPHORIBOSYLAMINO)METHYLIDENEAMINO] IMIDAZOLE-4-CARBOXAMIDE ISOMERASE"/>
    <property type="match status" value="1"/>
</dbReference>
<dbReference type="Pfam" id="PF00977">
    <property type="entry name" value="His_biosynth"/>
    <property type="match status" value="1"/>
</dbReference>
<dbReference type="SUPFAM" id="SSF51366">
    <property type="entry name" value="Ribulose-phoshate binding barrel"/>
    <property type="match status" value="1"/>
</dbReference>
<accession>A7GMU9</accession>
<proteinExistence type="inferred from homology"/>
<sequence>MEILPAIDLKEGRCVRLYQGEFNKETVVNEHPVAQAMIFEKMGANRLHIVDLDGAVLGKSANLSTIEDICKAVRISVQAGGGIRSLSAVEMLLSIGVEKVILGTAALHNRSFLEEVIRLYGEKIIVGIDAKNGYVATRGWLDMSEISYIELAKQMEAVGVQTIIFTDISKDGTLMGPNFAQLQLLQEEVSLRIIASGGISSLQDVEQLQAMNMYGVIIGKALYEKTMDLQEVLRVTKSC</sequence>
<feature type="chain" id="PRO_1000084088" description="1-(5-phosphoribosyl)-5-[(5-phosphoribosylamino)methylideneamino] imidazole-4-carboxamide isomerase">
    <location>
        <begin position="1"/>
        <end position="239"/>
    </location>
</feature>
<feature type="active site" description="Proton acceptor" evidence="1">
    <location>
        <position position="8"/>
    </location>
</feature>
<feature type="active site" description="Proton donor" evidence="1">
    <location>
        <position position="129"/>
    </location>
</feature>
<name>HIS4_BACCN</name>
<organism>
    <name type="scientific">Bacillus cytotoxicus (strain DSM 22905 / CIP 110041 / 391-98 / NVH 391-98)</name>
    <dbReference type="NCBI Taxonomy" id="315749"/>
    <lineage>
        <taxon>Bacteria</taxon>
        <taxon>Bacillati</taxon>
        <taxon>Bacillota</taxon>
        <taxon>Bacilli</taxon>
        <taxon>Bacillales</taxon>
        <taxon>Bacillaceae</taxon>
        <taxon>Bacillus</taxon>
        <taxon>Bacillus cereus group</taxon>
    </lineage>
</organism>
<gene>
    <name evidence="1" type="primary">hisA</name>
    <name type="ordered locus">Bcer98_1132</name>
</gene>
<keyword id="KW-0028">Amino-acid biosynthesis</keyword>
<keyword id="KW-0963">Cytoplasm</keyword>
<keyword id="KW-0368">Histidine biosynthesis</keyword>
<keyword id="KW-0413">Isomerase</keyword>